<comment type="function">
    <text evidence="2">Antimicrobial peptide with activity against fungi, Gram-positive and Gram-negative bacteria (PubMed:31635388). Is active against S.aureus (MIC=16 uM), MRSA (MIC=32 uM), E.faecalis (MIC=16 uM), E.coli (MIC=8 uM), P.aeruginosa (MIC=16 uM), K.pneumoniae (MIC=8 uM), and C.albicans (MIC=64 uM) (PubMed:31635388). Also inhibits biofilm formation (PubMed:31635388). Acts by disrupting cell membranes (PubMed:31635388). Also exhibits anti-proliferative effect against various human cancer cells (PubMed:31635388). Shows weak hemolytic activity towards horse erythrocytes (PubMed:31635388).</text>
</comment>
<comment type="subcellular location">
    <subcellularLocation>
        <location evidence="2">Secreted</location>
    </subcellularLocation>
    <subcellularLocation>
        <location evidence="2">Target cell membrane</location>
    </subcellularLocation>
    <text evidence="5">Forms a helical membrane channel in the prey.</text>
</comment>
<comment type="tissue specificity">
    <text evidence="5">Expressed by the skin glands.</text>
</comment>
<comment type="similarity">
    <text evidence="4">Belongs to the frog skin active peptide (FSAP) family. Dermaseptin subfamily.</text>
</comment>
<comment type="online information" name="The antimicrobial peptide database">
    <link uri="https://wangapd3.com/database/query_output.php?ID=03133"/>
</comment>
<evidence type="ECO:0000255" key="1"/>
<evidence type="ECO:0000269" key="2">
    <source>
    </source>
</evidence>
<evidence type="ECO:0000303" key="3">
    <source>
    </source>
</evidence>
<evidence type="ECO:0000305" key="4"/>
<evidence type="ECO:0000305" key="5">
    <source>
    </source>
</evidence>
<keyword id="KW-0027">Amidation</keyword>
<keyword id="KW-0878">Amphibian defense peptide</keyword>
<keyword id="KW-0044">Antibiotic</keyword>
<keyword id="KW-0929">Antimicrobial</keyword>
<keyword id="KW-0165">Cleavage on pair of basic residues</keyword>
<keyword id="KW-0295">Fungicide</keyword>
<keyword id="KW-0391">Immunity</keyword>
<keyword id="KW-0399">Innate immunity</keyword>
<keyword id="KW-0472">Membrane</keyword>
<keyword id="KW-0964">Secreted</keyword>
<keyword id="KW-0732">Signal</keyword>
<keyword id="KW-1052">Target cell membrane</keyword>
<keyword id="KW-1053">Target membrane</keyword>
<protein>
    <recommendedName>
        <fullName evidence="3">Dermaseptin-PT9</fullName>
        <shortName evidence="3">DPT9</shortName>
        <shortName evidence="4">DRS-PT9</shortName>
    </recommendedName>
</protein>
<sequence length="71" mass="8026">MAFLKKSLFLVLFLGLVSLSICEEEKRENEMEQEDDEQSEMKRGLWSKIKDAAKTAGKAALGFVNEMVGEQ</sequence>
<organism>
    <name type="scientific">Phyllomedusa tarsius</name>
    <name type="common">Brownbelly leaf frog</name>
    <name type="synonym">Phyllomedusa tarsia</name>
    <dbReference type="NCBI Taxonomy" id="306084"/>
    <lineage>
        <taxon>Eukaryota</taxon>
        <taxon>Metazoa</taxon>
        <taxon>Chordata</taxon>
        <taxon>Craniata</taxon>
        <taxon>Vertebrata</taxon>
        <taxon>Euteleostomi</taxon>
        <taxon>Amphibia</taxon>
        <taxon>Batrachia</taxon>
        <taxon>Anura</taxon>
        <taxon>Neobatrachia</taxon>
        <taxon>Hyloidea</taxon>
        <taxon>Hylidae</taxon>
        <taxon>Phyllomedusinae</taxon>
        <taxon>Phyllomedusa</taxon>
    </lineage>
</organism>
<name>DRS9_PHYTS</name>
<proteinExistence type="evidence at protein level"/>
<dbReference type="EMBL" id="MN399674">
    <property type="protein sequence ID" value="QFU80916.1"/>
    <property type="molecule type" value="mRNA"/>
</dbReference>
<dbReference type="GO" id="GO:0005576">
    <property type="term" value="C:extracellular region"/>
    <property type="evidence" value="ECO:0007669"/>
    <property type="project" value="UniProtKB-SubCell"/>
</dbReference>
<dbReference type="GO" id="GO:0016020">
    <property type="term" value="C:membrane"/>
    <property type="evidence" value="ECO:0007669"/>
    <property type="project" value="UniProtKB-KW"/>
</dbReference>
<dbReference type="GO" id="GO:0044218">
    <property type="term" value="C:other organism cell membrane"/>
    <property type="evidence" value="ECO:0007669"/>
    <property type="project" value="UniProtKB-KW"/>
</dbReference>
<dbReference type="GO" id="GO:0042742">
    <property type="term" value="P:defense response to bacterium"/>
    <property type="evidence" value="ECO:0007669"/>
    <property type="project" value="UniProtKB-KW"/>
</dbReference>
<dbReference type="GO" id="GO:0050832">
    <property type="term" value="P:defense response to fungus"/>
    <property type="evidence" value="ECO:0007669"/>
    <property type="project" value="UniProtKB-KW"/>
</dbReference>
<dbReference type="GO" id="GO:0045087">
    <property type="term" value="P:innate immune response"/>
    <property type="evidence" value="ECO:0007669"/>
    <property type="project" value="UniProtKB-KW"/>
</dbReference>
<dbReference type="GO" id="GO:0031640">
    <property type="term" value="P:killing of cells of another organism"/>
    <property type="evidence" value="ECO:0007669"/>
    <property type="project" value="UniProtKB-KW"/>
</dbReference>
<dbReference type="InterPro" id="IPR022731">
    <property type="entry name" value="Dermaseptin_dom"/>
</dbReference>
<dbReference type="InterPro" id="IPR004275">
    <property type="entry name" value="Frog_antimicrobial_propeptide"/>
</dbReference>
<dbReference type="InterPro" id="IPR016322">
    <property type="entry name" value="FSAP"/>
</dbReference>
<dbReference type="Pfam" id="PF12121">
    <property type="entry name" value="DD_K"/>
    <property type="match status" value="1"/>
</dbReference>
<dbReference type="Pfam" id="PF03032">
    <property type="entry name" value="FSAP_sig_propep"/>
    <property type="match status" value="1"/>
</dbReference>
<dbReference type="PIRSF" id="PIRSF001822">
    <property type="entry name" value="Dermaseptin_precursor"/>
    <property type="match status" value="1"/>
</dbReference>
<feature type="signal peptide" evidence="1">
    <location>
        <begin position="1"/>
        <end position="22"/>
    </location>
</feature>
<feature type="propeptide" id="PRO_0000449995" evidence="2">
    <location>
        <begin position="23"/>
        <end position="43"/>
    </location>
</feature>
<feature type="peptide" id="PRO_0000449996" description="Dermaseptin-PT9" evidence="2">
    <location>
        <begin position="44"/>
        <end position="68"/>
    </location>
</feature>
<feature type="propeptide" id="PRO_0000449997" evidence="2">
    <location>
        <begin position="69"/>
        <end position="71"/>
    </location>
</feature>
<feature type="modified residue" description="Valine amide" evidence="2">
    <location>
        <position position="68"/>
    </location>
</feature>
<feature type="mutagenesis site" description="Important increase in antimicrobial activity (both on bacteria and biofilms), increase of anti-proliferative effects against cancer cells, small increase in hemolysis, and increase in helicity; when associated with K-66." evidence="2">
    <original>D</original>
    <variation>K</variation>
    <location>
        <position position="51"/>
    </location>
</feature>
<feature type="mutagenesis site" description="Important increase in antimicrobial activity (both on bacteria and biofilms), increase of anti-proliferative effects against cancer cells, small increase in hemolysis, and increase in helicity; when associated with K-51." evidence="2">
    <original>E</original>
    <variation>K</variation>
    <location>
        <position position="66"/>
    </location>
</feature>
<accession>A0A5P9NYS6</accession>
<reference key="1">
    <citation type="journal article" date="2019" name="Biomolecules">
        <title>A novel dermaseptin isolated from the skin secretion of phyllomedusa tarsius and its cationicity-enhanced analogue exhibiting effective antimicrobial and anti-proliferative activities.</title>
        <authorList>
            <person name="Li M."/>
            <person name="Xi X."/>
            <person name="Ma C."/>
            <person name="Chen X."/>
            <person name="Zhou M."/>
            <person name="Burrows J.F."/>
            <person name="Chen T."/>
            <person name="Wang L."/>
        </authorList>
    </citation>
    <scope>NUCLEOTIDE SEQUENCE [MRNA]</scope>
    <scope>FUNCTION</scope>
    <scope>IDENTIFICATION BY MASS SPECTROMETRY</scope>
    <scope>SYNTHESIS OF 44-68</scope>
    <scope>SUBCELLULAR LOCATION</scope>
    <scope>MUTAGENESIS OF ASP-51 AND GLU-66</scope>
    <scope>AMIDATION AT VAL-68</scope>
    <source>
        <tissue>Skin secretion</tissue>
    </source>
</reference>